<gene>
    <name type="ordered locus">BA_4170</name>
    <name type="ordered locus">GBAA_4170</name>
    <name type="ordered locus">BAS3872</name>
</gene>
<sequence>MTLQTFKSTDFEVFTVDGLEERMSAIKTNIHPKLEALGEQFAAYLSKQTDENFFYHVAKHARRKVNPPNDTWVAFSTNKRGYKMLPHFQIGLWGTHAFIYFGLIYECPQKVETAHAFLEHLNDLKTNIPNDFVWSIDHTKPSVKLHKTLETEDLQKMIERLATVKKAELLVGIHISPEEFSAMTNEQFLAKIESTMQSLLPLYALCNR</sequence>
<accession>Q81MS4</accession>
<accession>Q6HU66</accession>
<accession>Q6KNF0</accession>
<comment type="similarity">
    <text evidence="1">Belongs to the UPF0637 family.</text>
</comment>
<evidence type="ECO:0000255" key="1">
    <source>
        <dbReference type="HAMAP-Rule" id="MF_01851"/>
    </source>
</evidence>
<feature type="chain" id="PRO_0000348289" description="UPF0637 protein BA_4170/GBAA_4170/BAS3872">
    <location>
        <begin position="1"/>
        <end position="208"/>
    </location>
</feature>
<name>Y3872_BACAN</name>
<proteinExistence type="inferred from homology"/>
<protein>
    <recommendedName>
        <fullName evidence="1">UPF0637 protein BA_4170/GBAA_4170/BAS3872</fullName>
    </recommendedName>
</protein>
<organism>
    <name type="scientific">Bacillus anthracis</name>
    <dbReference type="NCBI Taxonomy" id="1392"/>
    <lineage>
        <taxon>Bacteria</taxon>
        <taxon>Bacillati</taxon>
        <taxon>Bacillota</taxon>
        <taxon>Bacilli</taxon>
        <taxon>Bacillales</taxon>
        <taxon>Bacillaceae</taxon>
        <taxon>Bacillus</taxon>
        <taxon>Bacillus cereus group</taxon>
    </lineage>
</organism>
<reference key="1">
    <citation type="journal article" date="2003" name="Nature">
        <title>The genome sequence of Bacillus anthracis Ames and comparison to closely related bacteria.</title>
        <authorList>
            <person name="Read T.D."/>
            <person name="Peterson S.N."/>
            <person name="Tourasse N.J."/>
            <person name="Baillie L.W."/>
            <person name="Paulsen I.T."/>
            <person name="Nelson K.E."/>
            <person name="Tettelin H."/>
            <person name="Fouts D.E."/>
            <person name="Eisen J.A."/>
            <person name="Gill S.R."/>
            <person name="Holtzapple E.K."/>
            <person name="Okstad O.A."/>
            <person name="Helgason E."/>
            <person name="Rilstone J."/>
            <person name="Wu M."/>
            <person name="Kolonay J.F."/>
            <person name="Beanan M.J."/>
            <person name="Dodson R.J."/>
            <person name="Brinkac L.M."/>
            <person name="Gwinn M.L."/>
            <person name="DeBoy R.T."/>
            <person name="Madpu R."/>
            <person name="Daugherty S.C."/>
            <person name="Durkin A.S."/>
            <person name="Haft D.H."/>
            <person name="Nelson W.C."/>
            <person name="Peterson J.D."/>
            <person name="Pop M."/>
            <person name="Khouri H.M."/>
            <person name="Radune D."/>
            <person name="Benton J.L."/>
            <person name="Mahamoud Y."/>
            <person name="Jiang L."/>
            <person name="Hance I.R."/>
            <person name="Weidman J.F."/>
            <person name="Berry K.J."/>
            <person name="Plaut R.D."/>
            <person name="Wolf A.M."/>
            <person name="Watkins K.L."/>
            <person name="Nierman W.C."/>
            <person name="Hazen A."/>
            <person name="Cline R.T."/>
            <person name="Redmond C."/>
            <person name="Thwaite J.E."/>
            <person name="White O."/>
            <person name="Salzberg S.L."/>
            <person name="Thomason B."/>
            <person name="Friedlander A.M."/>
            <person name="Koehler T.M."/>
            <person name="Hanna P.C."/>
            <person name="Kolstoe A.-B."/>
            <person name="Fraser C.M."/>
        </authorList>
    </citation>
    <scope>NUCLEOTIDE SEQUENCE [LARGE SCALE GENOMIC DNA]</scope>
    <source>
        <strain>Ames / isolate Porton</strain>
    </source>
</reference>
<reference key="2">
    <citation type="submission" date="2004-01" db="EMBL/GenBank/DDBJ databases">
        <title>Complete genome sequence of Bacillus anthracis Sterne.</title>
        <authorList>
            <person name="Brettin T.S."/>
            <person name="Bruce D."/>
            <person name="Challacombe J.F."/>
            <person name="Gilna P."/>
            <person name="Han C."/>
            <person name="Hill K."/>
            <person name="Hitchcock P."/>
            <person name="Jackson P."/>
            <person name="Keim P."/>
            <person name="Longmire J."/>
            <person name="Lucas S."/>
            <person name="Okinaka R."/>
            <person name="Richardson P."/>
            <person name="Rubin E."/>
            <person name="Tice H."/>
        </authorList>
    </citation>
    <scope>NUCLEOTIDE SEQUENCE [LARGE SCALE GENOMIC DNA]</scope>
    <source>
        <strain>Sterne</strain>
    </source>
</reference>
<reference key="3">
    <citation type="journal article" date="2009" name="J. Bacteriol.">
        <title>The complete genome sequence of Bacillus anthracis Ames 'Ancestor'.</title>
        <authorList>
            <person name="Ravel J."/>
            <person name="Jiang L."/>
            <person name="Stanley S.T."/>
            <person name="Wilson M.R."/>
            <person name="Decker R.S."/>
            <person name="Read T.D."/>
            <person name="Worsham P."/>
            <person name="Keim P.S."/>
            <person name="Salzberg S.L."/>
            <person name="Fraser-Liggett C.M."/>
            <person name="Rasko D.A."/>
        </authorList>
    </citation>
    <scope>NUCLEOTIDE SEQUENCE [LARGE SCALE GENOMIC DNA]</scope>
    <source>
        <strain>Ames ancestor</strain>
    </source>
</reference>
<keyword id="KW-1185">Reference proteome</keyword>
<dbReference type="EMBL" id="AE016879">
    <property type="protein sequence ID" value="AAP27894.1"/>
    <property type="molecule type" value="Genomic_DNA"/>
</dbReference>
<dbReference type="EMBL" id="AE017334">
    <property type="protein sequence ID" value="AAT33292.1"/>
    <property type="molecule type" value="Genomic_DNA"/>
</dbReference>
<dbReference type="EMBL" id="AE017225">
    <property type="protein sequence ID" value="AAT56173.1"/>
    <property type="molecule type" value="Genomic_DNA"/>
</dbReference>
<dbReference type="RefSeq" id="NP_846408.1">
    <property type="nucleotide sequence ID" value="NC_003997.3"/>
</dbReference>
<dbReference type="RefSeq" id="WP_000175083.1">
    <property type="nucleotide sequence ID" value="NZ_WXXJ01000027.1"/>
</dbReference>
<dbReference type="RefSeq" id="YP_030122.1">
    <property type="nucleotide sequence ID" value="NC_005945.1"/>
</dbReference>
<dbReference type="SMR" id="Q81MS4"/>
<dbReference type="STRING" id="261594.GBAA_4170"/>
<dbReference type="DNASU" id="1088776"/>
<dbReference type="GeneID" id="45023847"/>
<dbReference type="KEGG" id="ban:BA_4170"/>
<dbReference type="KEGG" id="banh:HYU01_20400"/>
<dbReference type="KEGG" id="bar:GBAA_4170"/>
<dbReference type="KEGG" id="bat:BAS3872"/>
<dbReference type="PATRIC" id="fig|198094.11.peg.4141"/>
<dbReference type="eggNOG" id="COG4493">
    <property type="taxonomic scope" value="Bacteria"/>
</dbReference>
<dbReference type="HOGENOM" id="CLU_096059_0_0_9"/>
<dbReference type="OMA" id="WFAIIYE"/>
<dbReference type="OrthoDB" id="9812818at2"/>
<dbReference type="Proteomes" id="UP000000427">
    <property type="component" value="Chromosome"/>
</dbReference>
<dbReference type="Proteomes" id="UP000000594">
    <property type="component" value="Chromosome"/>
</dbReference>
<dbReference type="Gene3D" id="3.30.930.20">
    <property type="entry name" value="Protein of unknown function DUF1054"/>
    <property type="match status" value="1"/>
</dbReference>
<dbReference type="HAMAP" id="MF_01851">
    <property type="entry name" value="UPF0637"/>
    <property type="match status" value="1"/>
</dbReference>
<dbReference type="InterPro" id="IPR009403">
    <property type="entry name" value="UPF0637"/>
</dbReference>
<dbReference type="InterPro" id="IPR053707">
    <property type="entry name" value="UPF0637_domain_sf"/>
</dbReference>
<dbReference type="Pfam" id="PF06335">
    <property type="entry name" value="DUF1054"/>
    <property type="match status" value="1"/>
</dbReference>
<dbReference type="PIRSF" id="PIRSF021332">
    <property type="entry name" value="DUF1054"/>
    <property type="match status" value="1"/>
</dbReference>
<dbReference type="SUPFAM" id="SSF142913">
    <property type="entry name" value="YktB/PF0168-like"/>
    <property type="match status" value="1"/>
</dbReference>